<gene>
    <name evidence="1" type="primary">atpE</name>
    <name type="ordered locus">MAG3510</name>
</gene>
<protein>
    <recommendedName>
        <fullName evidence="1">ATP synthase subunit c</fullName>
    </recommendedName>
    <alternativeName>
        <fullName evidence="1">ATP synthase F(0) sector subunit c</fullName>
    </alternativeName>
    <alternativeName>
        <fullName evidence="1">F-type ATPase subunit c</fullName>
        <shortName evidence="1">F-ATPase subunit c</shortName>
    </alternativeName>
    <alternativeName>
        <fullName evidence="1">Lipid-binding protein</fullName>
    </alternativeName>
</protein>
<keyword id="KW-0066">ATP synthesis</keyword>
<keyword id="KW-1003">Cell membrane</keyword>
<keyword id="KW-0138">CF(0)</keyword>
<keyword id="KW-0375">Hydrogen ion transport</keyword>
<keyword id="KW-0406">Ion transport</keyword>
<keyword id="KW-0446">Lipid-binding</keyword>
<keyword id="KW-0472">Membrane</keyword>
<keyword id="KW-1185">Reference proteome</keyword>
<keyword id="KW-0812">Transmembrane</keyword>
<keyword id="KW-1133">Transmembrane helix</keyword>
<keyword id="KW-0813">Transport</keyword>
<dbReference type="EMBL" id="CU179680">
    <property type="protein sequence ID" value="CAL59049.1"/>
    <property type="molecule type" value="Genomic_DNA"/>
</dbReference>
<dbReference type="RefSeq" id="WP_004024493.1">
    <property type="nucleotide sequence ID" value="NC_009497.1"/>
</dbReference>
<dbReference type="SMR" id="A5IYE0"/>
<dbReference type="STRING" id="347257.MAG3510"/>
<dbReference type="GeneID" id="66645682"/>
<dbReference type="GeneID" id="93358109"/>
<dbReference type="KEGG" id="maa:MAG3510"/>
<dbReference type="HOGENOM" id="CLU_148047_2_1_14"/>
<dbReference type="Proteomes" id="UP000007065">
    <property type="component" value="Chromosome"/>
</dbReference>
<dbReference type="GO" id="GO:0005886">
    <property type="term" value="C:plasma membrane"/>
    <property type="evidence" value="ECO:0007669"/>
    <property type="project" value="UniProtKB-SubCell"/>
</dbReference>
<dbReference type="GO" id="GO:0045259">
    <property type="term" value="C:proton-transporting ATP synthase complex"/>
    <property type="evidence" value="ECO:0007669"/>
    <property type="project" value="UniProtKB-KW"/>
</dbReference>
<dbReference type="GO" id="GO:0033177">
    <property type="term" value="C:proton-transporting two-sector ATPase complex, proton-transporting domain"/>
    <property type="evidence" value="ECO:0007669"/>
    <property type="project" value="InterPro"/>
</dbReference>
<dbReference type="GO" id="GO:0008289">
    <property type="term" value="F:lipid binding"/>
    <property type="evidence" value="ECO:0007669"/>
    <property type="project" value="UniProtKB-KW"/>
</dbReference>
<dbReference type="GO" id="GO:0046933">
    <property type="term" value="F:proton-transporting ATP synthase activity, rotational mechanism"/>
    <property type="evidence" value="ECO:0007669"/>
    <property type="project" value="UniProtKB-UniRule"/>
</dbReference>
<dbReference type="CDD" id="cd18184">
    <property type="entry name" value="ATP-synt_Fo_c_NaATPase"/>
    <property type="match status" value="1"/>
</dbReference>
<dbReference type="Gene3D" id="1.20.120.610">
    <property type="entry name" value="lithium bound rotor ring of v- atpase"/>
    <property type="match status" value="1"/>
</dbReference>
<dbReference type="HAMAP" id="MF_01396">
    <property type="entry name" value="ATP_synth_c_bact"/>
    <property type="match status" value="1"/>
</dbReference>
<dbReference type="InterPro" id="IPR005953">
    <property type="entry name" value="ATP_synth_csu_bac/chlpt"/>
</dbReference>
<dbReference type="InterPro" id="IPR000454">
    <property type="entry name" value="ATP_synth_F0_csu"/>
</dbReference>
<dbReference type="InterPro" id="IPR020537">
    <property type="entry name" value="ATP_synth_F0_csu_DDCD_BS"/>
</dbReference>
<dbReference type="InterPro" id="IPR002379">
    <property type="entry name" value="ATPase_proteolipid_c-like_dom"/>
</dbReference>
<dbReference type="InterPro" id="IPR035921">
    <property type="entry name" value="F/V-ATP_Csub_sf"/>
</dbReference>
<dbReference type="NCBIfam" id="TIGR01260">
    <property type="entry name" value="ATP_synt_c"/>
    <property type="match status" value="1"/>
</dbReference>
<dbReference type="Pfam" id="PF00137">
    <property type="entry name" value="ATP-synt_C"/>
    <property type="match status" value="1"/>
</dbReference>
<dbReference type="PRINTS" id="PR00124">
    <property type="entry name" value="ATPASEC"/>
</dbReference>
<dbReference type="SUPFAM" id="SSF81333">
    <property type="entry name" value="F1F0 ATP synthase subunit C"/>
    <property type="match status" value="1"/>
</dbReference>
<dbReference type="PROSITE" id="PS00605">
    <property type="entry name" value="ATPASE_C"/>
    <property type="match status" value="1"/>
</dbReference>
<name>ATPL_MYCAP</name>
<evidence type="ECO:0000255" key="1">
    <source>
        <dbReference type="HAMAP-Rule" id="MF_01396"/>
    </source>
</evidence>
<reference key="1">
    <citation type="journal article" date="2007" name="PLoS Genet.">
        <title>Being pathogenic, plastic, and sexual while living with a nearly minimal bacterial genome.</title>
        <authorList>
            <person name="Sirand-Pugnet P."/>
            <person name="Lartigue C."/>
            <person name="Marenda M."/>
            <person name="Jacob D."/>
            <person name="Barre A."/>
            <person name="Barbe V."/>
            <person name="Schenowitz C."/>
            <person name="Mangenot S."/>
            <person name="Couloux A."/>
            <person name="Segurens B."/>
            <person name="de Daruvar A."/>
            <person name="Blanchard A."/>
            <person name="Citti C."/>
        </authorList>
    </citation>
    <scope>NUCLEOTIDE SEQUENCE [LARGE SCALE GENOMIC DNA]</scope>
    <source>
        <strain>NCTC 10123 / CIP 59.7 / PG2</strain>
    </source>
</reference>
<proteinExistence type="inferred from homology"/>
<sequence length="75" mass="7505">MEKGLIAIGIGISMISGLGVGLGQGLAAGKAAEAVGRNPEAASKIRTMMLVGQAVAESAAIYALVISILLMFAFN</sequence>
<organism>
    <name type="scientific">Mycoplasmopsis agalactiae (strain NCTC 10123 / CIP 59.7 / PG2)</name>
    <name type="common">Mycoplasma agalactiae</name>
    <dbReference type="NCBI Taxonomy" id="347257"/>
    <lineage>
        <taxon>Bacteria</taxon>
        <taxon>Bacillati</taxon>
        <taxon>Mycoplasmatota</taxon>
        <taxon>Mycoplasmoidales</taxon>
        <taxon>Metamycoplasmataceae</taxon>
        <taxon>Mycoplasmopsis</taxon>
    </lineage>
</organism>
<accession>A5IYE0</accession>
<feature type="chain" id="PRO_0000365895" description="ATP synthase subunit c">
    <location>
        <begin position="1"/>
        <end position="75"/>
    </location>
</feature>
<feature type="transmembrane region" description="Helical" evidence="1">
    <location>
        <begin position="4"/>
        <end position="24"/>
    </location>
</feature>
<feature type="transmembrane region" description="Helical" evidence="1">
    <location>
        <begin position="54"/>
        <end position="74"/>
    </location>
</feature>
<feature type="site" description="Reversibly protonated during proton transport" evidence="1">
    <location>
        <position position="57"/>
    </location>
</feature>
<comment type="function">
    <text evidence="1">F(1)F(0) ATP synthase produces ATP from ADP in the presence of a proton or sodium gradient. F-type ATPases consist of two structural domains, F(1) containing the extramembraneous catalytic core and F(0) containing the membrane proton channel, linked together by a central stalk and a peripheral stalk. During catalysis, ATP synthesis in the catalytic domain of F(1) is coupled via a rotary mechanism of the central stalk subunits to proton translocation.</text>
</comment>
<comment type="function">
    <text evidence="1">Key component of the F(0) channel; it plays a direct role in translocation across the membrane. A homomeric c-ring of between 10-14 subunits forms the central stalk rotor element with the F(1) delta and epsilon subunits.</text>
</comment>
<comment type="subunit">
    <text evidence="1">F-type ATPases have 2 components, F(1) - the catalytic core - and F(0) - the membrane proton channel. F(1) has five subunits: alpha(3), beta(3), gamma(1), delta(1), epsilon(1). F(0) has three main subunits: a(1), b(2) and c(10-14). The alpha and beta chains form an alternating ring which encloses part of the gamma chain. F(1) is attached to F(0) by a central stalk formed by the gamma and epsilon chains, while a peripheral stalk is formed by the delta and b chains.</text>
</comment>
<comment type="subcellular location">
    <subcellularLocation>
        <location evidence="1">Cell membrane</location>
        <topology evidence="1">Multi-pass membrane protein</topology>
    </subcellularLocation>
</comment>
<comment type="similarity">
    <text evidence="1">Belongs to the ATPase C chain family.</text>
</comment>